<comment type="function">
    <text evidence="1">Heme-binding protein able to scavenge peroxynitrite and to protect free L-tyrosine against peroxynitrite-mediated nitration, by acting as a peroxynitrite isomerase that converts peroxynitrite to nitrate. Therefore, this protein likely plays a role in peroxynitrite sensing and in the detoxification of reactive nitrogen and oxygen species (RNS and ROS, respectively). Is able to bind nitric oxide (NO) in vitro, but may act as a sensor of peroxynitrite levels in vivo.</text>
</comment>
<comment type="catalytic activity">
    <reaction evidence="1">
        <text>peroxynitrite = nitrate</text>
        <dbReference type="Rhea" id="RHEA:63116"/>
        <dbReference type="ChEBI" id="CHEBI:17632"/>
        <dbReference type="ChEBI" id="CHEBI:25941"/>
    </reaction>
    <physiologicalReaction direction="left-to-right" evidence="1">
        <dbReference type="Rhea" id="RHEA:63117"/>
    </physiologicalReaction>
</comment>
<comment type="cofactor">
    <cofactor evidence="1">
        <name>heme b</name>
        <dbReference type="ChEBI" id="CHEBI:60344"/>
    </cofactor>
    <text evidence="1">Binds 1 heme b group per subunit, that coordinates a highly solvent-exposed Fe(III) atom.</text>
</comment>
<comment type="pathway">
    <text evidence="1">Nitrogen metabolism.</text>
</comment>
<comment type="domain">
    <text evidence="1">Forms a 10-stranded antiparallel beta-barrel structure able to accommodate a hydrophobic ligand in its interior. In fact, this fold hosts the heme group, which is located in a wide surface cleft.</text>
</comment>
<comment type="similarity">
    <text evidence="1">Belongs to the nitrobindin family.</text>
</comment>
<feature type="chain" id="PRO_0000356939" description="Peroxynitrite isomerase 1">
    <location>
        <begin position="1"/>
        <end position="164"/>
    </location>
</feature>
<feature type="short sequence motif" description="GXWXGXG" evidence="1">
    <location>
        <begin position="20"/>
        <end position="26"/>
    </location>
</feature>
<feature type="binding site" description="axial binding residue" evidence="1">
    <location>
        <position position="155"/>
    </location>
    <ligand>
        <name>heme b</name>
        <dbReference type="ChEBI" id="CHEBI:60344"/>
    </ligand>
    <ligandPart>
        <name>Fe</name>
        <dbReference type="ChEBI" id="CHEBI:18248"/>
    </ligandPart>
</feature>
<evidence type="ECO:0000255" key="1">
    <source>
        <dbReference type="HAMAP-Rule" id="MF_01297"/>
    </source>
</evidence>
<organism>
    <name type="scientific">Mycolicibacterium vanbaalenii (strain DSM 7251 / JCM 13017 / BCRC 16820 / KCTC 9966 / NRRL B-24157 / PYR-1)</name>
    <name type="common">Mycobacterium vanbaalenii</name>
    <dbReference type="NCBI Taxonomy" id="350058"/>
    <lineage>
        <taxon>Bacteria</taxon>
        <taxon>Bacillati</taxon>
        <taxon>Actinomycetota</taxon>
        <taxon>Actinomycetes</taxon>
        <taxon>Mycobacteriales</taxon>
        <taxon>Mycobacteriaceae</taxon>
        <taxon>Mycolicibacterium</taxon>
    </lineage>
</organism>
<reference key="1">
    <citation type="submission" date="2006-12" db="EMBL/GenBank/DDBJ databases">
        <title>Complete sequence of Mycobacterium vanbaalenii PYR-1.</title>
        <authorList>
            <consortium name="US DOE Joint Genome Institute"/>
            <person name="Copeland A."/>
            <person name="Lucas S."/>
            <person name="Lapidus A."/>
            <person name="Barry K."/>
            <person name="Detter J.C."/>
            <person name="Glavina del Rio T."/>
            <person name="Hammon N."/>
            <person name="Israni S."/>
            <person name="Dalin E."/>
            <person name="Tice H."/>
            <person name="Pitluck S."/>
            <person name="Singan V."/>
            <person name="Schmutz J."/>
            <person name="Larimer F."/>
            <person name="Land M."/>
            <person name="Hauser L."/>
            <person name="Kyrpides N."/>
            <person name="Anderson I.J."/>
            <person name="Miller C."/>
            <person name="Richardson P."/>
        </authorList>
    </citation>
    <scope>NUCLEOTIDE SEQUENCE [LARGE SCALE GENOMIC DNA]</scope>
    <source>
        <strain>DSM 7251 / JCM 13017 / BCRC 16820 / KCTC 9966 / NRRL B-24157 / PYR-1</strain>
    </source>
</reference>
<dbReference type="EC" id="5.99.-.-" evidence="1"/>
<dbReference type="EMBL" id="CP000511">
    <property type="protein sequence ID" value="ABM11297.1"/>
    <property type="molecule type" value="Genomic_DNA"/>
</dbReference>
<dbReference type="RefSeq" id="WP_011777769.1">
    <property type="nucleotide sequence ID" value="NC_008726.1"/>
</dbReference>
<dbReference type="SMR" id="A1T297"/>
<dbReference type="STRING" id="350058.Mvan_0449"/>
<dbReference type="KEGG" id="mva:Mvan_0449"/>
<dbReference type="eggNOG" id="COG4044">
    <property type="taxonomic scope" value="Bacteria"/>
</dbReference>
<dbReference type="HOGENOM" id="CLU_085483_0_0_11"/>
<dbReference type="Proteomes" id="UP000009159">
    <property type="component" value="Chromosome"/>
</dbReference>
<dbReference type="GO" id="GO:0020037">
    <property type="term" value="F:heme binding"/>
    <property type="evidence" value="ECO:0007669"/>
    <property type="project" value="UniProtKB-UniRule"/>
</dbReference>
<dbReference type="GO" id="GO:0046872">
    <property type="term" value="F:metal ion binding"/>
    <property type="evidence" value="ECO:0007669"/>
    <property type="project" value="UniProtKB-KW"/>
</dbReference>
<dbReference type="GO" id="GO:0062213">
    <property type="term" value="F:peroxynitrite isomerase activity"/>
    <property type="evidence" value="ECO:0007669"/>
    <property type="project" value="UniProtKB-UniRule"/>
</dbReference>
<dbReference type="CDD" id="cd07828">
    <property type="entry name" value="lipocalin_heme-bd-THAP4-like"/>
    <property type="match status" value="1"/>
</dbReference>
<dbReference type="Gene3D" id="2.40.128.20">
    <property type="match status" value="1"/>
</dbReference>
<dbReference type="HAMAP" id="MF_01297">
    <property type="entry name" value="nitrobindin"/>
    <property type="match status" value="1"/>
</dbReference>
<dbReference type="InterPro" id="IPR012674">
    <property type="entry name" value="Calycin"/>
</dbReference>
<dbReference type="InterPro" id="IPR022939">
    <property type="entry name" value="Nb(III)_bact/plant"/>
</dbReference>
<dbReference type="InterPro" id="IPR045165">
    <property type="entry name" value="Nitrobindin"/>
</dbReference>
<dbReference type="InterPro" id="IPR054873">
    <property type="entry name" value="PeroxynitIsom"/>
</dbReference>
<dbReference type="InterPro" id="IPR014878">
    <property type="entry name" value="THAP4-like_heme-bd"/>
</dbReference>
<dbReference type="NCBIfam" id="NF045819">
    <property type="entry name" value="PeroxynitIsom"/>
    <property type="match status" value="1"/>
</dbReference>
<dbReference type="PANTHER" id="PTHR15854:SF4">
    <property type="entry name" value="PEROXYNITRITE ISOMERASE THAP4"/>
    <property type="match status" value="1"/>
</dbReference>
<dbReference type="PANTHER" id="PTHR15854">
    <property type="entry name" value="THAP4 PROTEIN"/>
    <property type="match status" value="1"/>
</dbReference>
<dbReference type="Pfam" id="PF08768">
    <property type="entry name" value="THAP4_heme-bd"/>
    <property type="match status" value="1"/>
</dbReference>
<dbReference type="SUPFAM" id="SSF50814">
    <property type="entry name" value="Lipocalins"/>
    <property type="match status" value="1"/>
</dbReference>
<gene>
    <name type="ordered locus">Mvan_0449</name>
</gene>
<keyword id="KW-0349">Heme</keyword>
<keyword id="KW-0408">Iron</keyword>
<keyword id="KW-0413">Isomerase</keyword>
<keyword id="KW-0479">Metal-binding</keyword>
<name>NB1_MYCVP</name>
<proteinExistence type="inferred from homology"/>
<accession>A1T297</accession>
<protein>
    <recommendedName>
        <fullName>Peroxynitrite isomerase 1</fullName>
        <ecNumber evidence="1">5.99.-.-</ecNumber>
    </recommendedName>
    <alternativeName>
        <fullName>Ferric nitrobindin</fullName>
        <shortName>Nb(III)</shortName>
    </alternativeName>
</protein>
<sequence length="164" mass="17690">MADSVPALHPDVAALAPLLGTWVGEGSGEYPTIEPFGYTEEITFGHVGKPFLTYAQRTRAADDGRPLHAETGYLRASAPDRIEWILAHPTGITEIQEGQLTADGDGLRMELVSSSIGRSGSAKEVTDVGRSIELRGDTLTYTLRMAAVGQPLQHHLSAVLRRVR</sequence>